<protein>
    <recommendedName>
        <fullName>Transcriptional regulator WhiB</fullName>
    </recommendedName>
</protein>
<dbReference type="EMBL" id="X62287">
    <property type="protein sequence ID" value="CAA44175.1"/>
    <property type="molecule type" value="Genomic_DNA"/>
</dbReference>
<dbReference type="EMBL" id="AL939114">
    <property type="protein sequence ID" value="CAB88918.1"/>
    <property type="molecule type" value="Genomic_DNA"/>
</dbReference>
<dbReference type="PIR" id="S20912">
    <property type="entry name" value="S20912"/>
</dbReference>
<dbReference type="RefSeq" id="NP_627256.1">
    <property type="nucleotide sequence ID" value="NC_003888.3"/>
</dbReference>
<dbReference type="RefSeq" id="WP_003975777.1">
    <property type="nucleotide sequence ID" value="NZ_VNID01000013.1"/>
</dbReference>
<dbReference type="SMR" id="Q7AKN0"/>
<dbReference type="STRING" id="100226.gene:17760649"/>
<dbReference type="PaxDb" id="100226-SCO3034"/>
<dbReference type="KEGG" id="sco:SCO3034"/>
<dbReference type="PATRIC" id="fig|100226.15.peg.3094"/>
<dbReference type="eggNOG" id="ENOG5032RUK">
    <property type="taxonomic scope" value="Bacteria"/>
</dbReference>
<dbReference type="HOGENOM" id="CLU_106245_6_1_11"/>
<dbReference type="InParanoid" id="Q7AKN0"/>
<dbReference type="OrthoDB" id="5192305at2"/>
<dbReference type="PhylomeDB" id="Q7AKN0"/>
<dbReference type="PRO" id="PR:Q7AKN0"/>
<dbReference type="Proteomes" id="UP000001973">
    <property type="component" value="Chromosome"/>
</dbReference>
<dbReference type="GO" id="GO:0005737">
    <property type="term" value="C:cytoplasm"/>
    <property type="evidence" value="ECO:0007669"/>
    <property type="project" value="UniProtKB-SubCell"/>
</dbReference>
<dbReference type="GO" id="GO:0051539">
    <property type="term" value="F:4 iron, 4 sulfur cluster binding"/>
    <property type="evidence" value="ECO:0000318"/>
    <property type="project" value="GO_Central"/>
</dbReference>
<dbReference type="GO" id="GO:0035731">
    <property type="term" value="F:dinitrosyl-iron complex binding"/>
    <property type="evidence" value="ECO:0007669"/>
    <property type="project" value="UniProtKB-UniRule"/>
</dbReference>
<dbReference type="GO" id="GO:0003677">
    <property type="term" value="F:DNA binding"/>
    <property type="evidence" value="ECO:0000318"/>
    <property type="project" value="GO_Central"/>
</dbReference>
<dbReference type="GO" id="GO:0046872">
    <property type="term" value="F:metal ion binding"/>
    <property type="evidence" value="ECO:0007669"/>
    <property type="project" value="UniProtKB-KW"/>
</dbReference>
<dbReference type="GO" id="GO:0047134">
    <property type="term" value="F:protein-disulfide reductase [NAD(P)H] activity"/>
    <property type="evidence" value="ECO:0000318"/>
    <property type="project" value="GO_Central"/>
</dbReference>
<dbReference type="GO" id="GO:0045454">
    <property type="term" value="P:cell redox homeostasis"/>
    <property type="evidence" value="ECO:0000318"/>
    <property type="project" value="GO_Central"/>
</dbReference>
<dbReference type="GO" id="GO:0045892">
    <property type="term" value="P:negative regulation of DNA-templated transcription"/>
    <property type="evidence" value="ECO:0000318"/>
    <property type="project" value="GO_Central"/>
</dbReference>
<dbReference type="GO" id="GO:0030435">
    <property type="term" value="P:sporulation resulting in formation of a cellular spore"/>
    <property type="evidence" value="ECO:0007669"/>
    <property type="project" value="UniProtKB-KW"/>
</dbReference>
<dbReference type="HAMAP" id="MF_01479">
    <property type="entry name" value="WhiB"/>
    <property type="match status" value="1"/>
</dbReference>
<dbReference type="InterPro" id="IPR034768">
    <property type="entry name" value="4FE4S_WBL"/>
</dbReference>
<dbReference type="InterPro" id="IPR003482">
    <property type="entry name" value="Whib"/>
</dbReference>
<dbReference type="PANTHER" id="PTHR38839:SF4">
    <property type="entry name" value="TRANSCRIPTIONAL REGULATOR WHIB"/>
    <property type="match status" value="1"/>
</dbReference>
<dbReference type="PANTHER" id="PTHR38839">
    <property type="entry name" value="TRANSCRIPTIONAL REGULATOR WHID-RELATED"/>
    <property type="match status" value="1"/>
</dbReference>
<dbReference type="Pfam" id="PF02467">
    <property type="entry name" value="Whib"/>
    <property type="match status" value="1"/>
</dbReference>
<dbReference type="PROSITE" id="PS51674">
    <property type="entry name" value="4FE4S_WBL"/>
    <property type="match status" value="1"/>
</dbReference>
<proteinExistence type="evidence at transcript level"/>
<organism>
    <name type="scientific">Streptomyces coelicolor (strain ATCC BAA-471 / A3(2) / M145)</name>
    <dbReference type="NCBI Taxonomy" id="100226"/>
    <lineage>
        <taxon>Bacteria</taxon>
        <taxon>Bacillati</taxon>
        <taxon>Actinomycetota</taxon>
        <taxon>Actinomycetes</taxon>
        <taxon>Kitasatosporales</taxon>
        <taxon>Streptomycetaceae</taxon>
        <taxon>Streptomyces</taxon>
        <taxon>Streptomyces albidoflavus group</taxon>
    </lineage>
</organism>
<feature type="chain" id="PRO_0000420397" description="Transcriptional regulator WhiB">
    <location>
        <begin position="1"/>
        <end position="87"/>
    </location>
</feature>
<feature type="domain" description="4Fe-4S Wbl-type">
    <location>
        <begin position="24"/>
        <end position="81"/>
    </location>
</feature>
<feature type="binding site" evidence="1">
    <location>
        <position position="25"/>
    </location>
    <ligand>
        <name>[4Fe-4S] cluster</name>
        <dbReference type="ChEBI" id="CHEBI:49883"/>
    </ligand>
</feature>
<feature type="binding site" evidence="1">
    <location>
        <position position="48"/>
    </location>
    <ligand>
        <name>[4Fe-4S] cluster</name>
        <dbReference type="ChEBI" id="CHEBI:49883"/>
    </ligand>
</feature>
<feature type="binding site" evidence="1">
    <location>
        <position position="51"/>
    </location>
    <ligand>
        <name>[4Fe-4S] cluster</name>
        <dbReference type="ChEBI" id="CHEBI:49883"/>
    </ligand>
</feature>
<feature type="binding site" evidence="1">
    <location>
        <position position="57"/>
    </location>
    <ligand>
        <name>[4Fe-4S] cluster</name>
        <dbReference type="ChEBI" id="CHEBI:49883"/>
    </ligand>
</feature>
<reference key="1">
    <citation type="submission" date="1991-09" db="EMBL/GenBank/DDBJ databases">
        <authorList>
            <person name="Bruton C.J."/>
        </authorList>
    </citation>
    <scope>NUCLEOTIDE SEQUENCE [GENOMIC DNA]</scope>
    <source>
        <strain>ATCC BAA-471 / A3(2) / M145</strain>
    </source>
</reference>
<reference key="2">
    <citation type="journal article" date="1992" name="Mol. Gen. Genet.">
        <title>The Streptomyces coelicolor whiB gene encodes a small transcription factor-like protein dispensable for growth but essential for sporulation.</title>
        <authorList>
            <person name="Davis N.K."/>
            <person name="Chater K.F."/>
        </authorList>
    </citation>
    <scope>NUCLEOTIDE SEQUENCE [GENOMIC DNA]</scope>
    <scope>DISRUPTION PHENOTYPE</scope>
    <source>
        <strain>ATCC BAA-471 / A3(2) / M145</strain>
    </source>
</reference>
<reference key="3">
    <citation type="journal article" date="2002" name="Nature">
        <title>Complete genome sequence of the model actinomycete Streptomyces coelicolor A3(2).</title>
        <authorList>
            <person name="Bentley S.D."/>
            <person name="Chater K.F."/>
            <person name="Cerdeno-Tarraga A.-M."/>
            <person name="Challis G.L."/>
            <person name="Thomson N.R."/>
            <person name="James K.D."/>
            <person name="Harris D.E."/>
            <person name="Quail M.A."/>
            <person name="Kieser H."/>
            <person name="Harper D."/>
            <person name="Bateman A."/>
            <person name="Brown S."/>
            <person name="Chandra G."/>
            <person name="Chen C.W."/>
            <person name="Collins M."/>
            <person name="Cronin A."/>
            <person name="Fraser A."/>
            <person name="Goble A."/>
            <person name="Hidalgo J."/>
            <person name="Hornsby T."/>
            <person name="Howarth S."/>
            <person name="Huang C.-H."/>
            <person name="Kieser T."/>
            <person name="Larke L."/>
            <person name="Murphy L.D."/>
            <person name="Oliver K."/>
            <person name="O'Neil S."/>
            <person name="Rabbinowitsch E."/>
            <person name="Rajandream M.A."/>
            <person name="Rutherford K.M."/>
            <person name="Rutter S."/>
            <person name="Seeger K."/>
            <person name="Saunders D."/>
            <person name="Sharp S."/>
            <person name="Squares R."/>
            <person name="Squares S."/>
            <person name="Taylor K."/>
            <person name="Warren T."/>
            <person name="Wietzorrek A."/>
            <person name="Woodward J.R."/>
            <person name="Barrell B.G."/>
            <person name="Parkhill J."/>
            <person name="Hopwood D.A."/>
        </authorList>
    </citation>
    <scope>NUCLEOTIDE SEQUENCE [LARGE SCALE GENOMIC DNA]</scope>
    <source>
        <strain>ATCC BAA-471 / A3(2) / M145</strain>
    </source>
</reference>
<reference key="4">
    <citation type="journal article" date="1992" name="J. Bacteriol.">
        <title>Two promoters for the whiB sporulation gene of Streptomyces coelicolor A3(2) and their activities in relation to development.</title>
        <authorList>
            <person name="Soliveri J."/>
            <person name="Brown K.L."/>
            <person name="Buttner M.J."/>
            <person name="Chater K.F."/>
        </authorList>
    </citation>
    <scope>INDUCTION</scope>
    <source>
        <strain>ATCC BAA-471 / A3(2) / M145</strain>
    </source>
</reference>
<reference key="5">
    <citation type="journal article" date="2006" name="J. Bacteriol.">
        <title>Mapping essential domains of Mycobacterium smegmatis WhmD: insights into WhiB structure and function.</title>
        <authorList>
            <person name="Raghunand T.R."/>
            <person name="Bishai W.R."/>
        </authorList>
    </citation>
    <scope>FUNCTION</scope>
    <source>
        <strain>ATCC BAA-471 / A3(2) / M145</strain>
    </source>
</reference>
<name>WHIB_STRCO</name>
<gene>
    <name type="primary">whiB</name>
    <name type="synonym">whiB2</name>
    <name type="ordered locus">SCO3034</name>
</gene>
<sequence>MTELVQQLLVDDADEELGWQERALCAQTDPESFFPEKGGSTREAKKVCLACEVRSECLEYALANDERFGIWGGLSERERRRLKKAAV</sequence>
<comment type="function">
    <text evidence="1 4">Acts as a transcriptional regulator. Probably redox-responsive. The apo- but not holo-form probably binds DNA (By similarity). Complements a whiB2 disruption mutant in M.smegmatis (AC Q9S426).</text>
</comment>
<comment type="cofactor">
    <cofactor evidence="1">
        <name>[4Fe-4S] cluster</name>
        <dbReference type="ChEBI" id="CHEBI:49883"/>
    </cofactor>
    <text evidence="1">Binds 1 [4Fe-4S] cluster per subunit. Following nitrosylation of the [4Fe-4S] cluster binds 1 [4Fe-8(NO)] cluster per subunit.</text>
</comment>
<comment type="subcellular location">
    <subcellularLocation>
        <location evidence="1">Cytoplasm</location>
    </subcellularLocation>
</comment>
<comment type="induction">
    <text evidence="3">Transcribed from 2 promoters; expression from the stronger promoter is induced when aerial hyphae became visible and then declines. Expressed during exponential growth but decreases during stationary phase in liquid culture.</text>
</comment>
<comment type="PTM">
    <text evidence="1">The Fe-S cluster can be nitrosylated by nitric oxide (NO).</text>
</comment>
<comment type="PTM">
    <text evidence="1">Upon Fe-S cluster removal intramolecular disulfide bonds are formed.</text>
</comment>
<comment type="disruption phenotype">
    <text evidence="2">A white non-sporulating phenotype. Spore septation does not occur.</text>
</comment>
<comment type="similarity">
    <text evidence="5">Belongs to the WhiB family.</text>
</comment>
<evidence type="ECO:0000250" key="1"/>
<evidence type="ECO:0000269" key="2">
    <source>
    </source>
</evidence>
<evidence type="ECO:0000269" key="3">
    <source>
    </source>
</evidence>
<evidence type="ECO:0000269" key="4">
    <source>
    </source>
</evidence>
<evidence type="ECO:0000305" key="5"/>
<accession>Q7AKN0</accession>
<accession>Q53963</accession>
<keyword id="KW-0004">4Fe-4S</keyword>
<keyword id="KW-0963">Cytoplasm</keyword>
<keyword id="KW-1015">Disulfide bond</keyword>
<keyword id="KW-0238">DNA-binding</keyword>
<keyword id="KW-0408">Iron</keyword>
<keyword id="KW-0411">Iron-sulfur</keyword>
<keyword id="KW-0479">Metal-binding</keyword>
<keyword id="KW-1185">Reference proteome</keyword>
<keyword id="KW-0749">Sporulation</keyword>
<keyword id="KW-0804">Transcription</keyword>
<keyword id="KW-0805">Transcription regulation</keyword>